<proteinExistence type="evidence at transcript level"/>
<reference key="1">
    <citation type="submission" date="2004-06" db="EMBL/GenBank/DDBJ databases">
        <authorList>
            <consortium name="NIH - Zebrafish Gene Collection (ZGC) project"/>
        </authorList>
    </citation>
    <scope>NUCLEOTIDE SEQUENCE [LARGE SCALE MRNA]</scope>
    <source>
        <strain>AB</strain>
        <tissue>Embryo</tissue>
    </source>
</reference>
<evidence type="ECO:0000250" key="1">
    <source>
        <dbReference type="UniProtKB" id="Q96CB8"/>
    </source>
</evidence>
<evidence type="ECO:0000255" key="2">
    <source>
        <dbReference type="PROSITE-ProRule" id="PRU00146"/>
    </source>
</evidence>
<evidence type="ECO:0000256" key="3">
    <source>
        <dbReference type="SAM" id="MobiDB-lite"/>
    </source>
</evidence>
<evidence type="ECO:0000305" key="4"/>
<comment type="function">
    <text evidence="1">Component of the integrator complex, a multiprotein complex that terminates RNA polymerase II (Pol II) transcription in the promoter-proximal region of genes. The integrator complex provides a quality checkpoint during transcription elongation by driving premature transcription termination of transcripts that are unfavorably configured for transcriptional elongation: the complex terminates transcription by (1) catalyzing dephosphorylation of the C-terminal domain (CTD) of Pol II subunit POLR2A/RPB1 and SUPT5H/SPT5, (2) degrading the exiting nascent RNA transcript via endonuclease activity and (3) promoting the release of Pol II from bound DNA. The integrator complex is also involved in terminating the synthesis of non-coding Pol II transcripts, such as enhancer RNAs (eRNAs), small nuclear RNAs (snRNAs), telomerase RNAs and long non-coding RNAs (lncRNAs).</text>
</comment>
<comment type="subunit">
    <text evidence="1">Component of the Integrator complex, composed of core subunits INTS1, INTS2, INTS3, INTS4, INTS5, INTS6, INTS7, INTS8, INTS9/RC74, INTS10, INTS11/CPSF3L, INTS12, INTS13, INTS14 and INTS15. The core complex associates with protein phosphatase 2A subunits PPP2CA and PPP2R1A, to form the Integrator-PP2A (INTAC) complex.</text>
</comment>
<comment type="subcellular location">
    <subcellularLocation>
        <location evidence="1">Nucleus</location>
    </subcellularLocation>
</comment>
<comment type="similarity">
    <text evidence="4">Belongs to the Integrator subunit 12 family.</text>
</comment>
<gene>
    <name type="primary">ints12</name>
    <name type="ORF">zgc:86602</name>
</gene>
<dbReference type="EMBL" id="BC096989">
    <property type="protein sequence ID" value="AAH96989.1"/>
    <property type="molecule type" value="mRNA"/>
</dbReference>
<dbReference type="EMBL" id="BC071306">
    <property type="protein sequence ID" value="AAH71306.1"/>
    <property type="molecule type" value="mRNA"/>
</dbReference>
<dbReference type="RefSeq" id="NP_001002161.2">
    <property type="nucleotide sequence ID" value="NM_001002161.3"/>
</dbReference>
<dbReference type="SMR" id="Q6IQU7"/>
<dbReference type="FunCoup" id="Q6IQU7">
    <property type="interactions" value="1994"/>
</dbReference>
<dbReference type="STRING" id="7955.ENSDARP00000106610"/>
<dbReference type="PaxDb" id="7955-ENSDARP00000024241"/>
<dbReference type="Ensembl" id="ENSDART00000125690">
    <property type="protein sequence ID" value="ENSDARP00000106610"/>
    <property type="gene ID" value="ENSDARG00000091678"/>
</dbReference>
<dbReference type="GeneID" id="415251"/>
<dbReference type="KEGG" id="dre:415251"/>
<dbReference type="AGR" id="ZFIN:ZDB-GENE-040625-178"/>
<dbReference type="CTD" id="57117"/>
<dbReference type="ZFIN" id="ZDB-GENE-040625-178">
    <property type="gene designation" value="ints12"/>
</dbReference>
<dbReference type="eggNOG" id="KOG4323">
    <property type="taxonomic scope" value="Eukaryota"/>
</dbReference>
<dbReference type="HOGENOM" id="CLU_033336_0_0_1"/>
<dbReference type="InParanoid" id="Q6IQU7"/>
<dbReference type="OMA" id="QECHCLY"/>
<dbReference type="OrthoDB" id="5846437at2759"/>
<dbReference type="PhylomeDB" id="Q6IQU7"/>
<dbReference type="TreeFam" id="TF106418"/>
<dbReference type="Reactome" id="R-DRE-6807505">
    <property type="pathway name" value="RNA polymerase II transcribes snRNA genes"/>
</dbReference>
<dbReference type="PRO" id="PR:Q6IQU7"/>
<dbReference type="Proteomes" id="UP000000437">
    <property type="component" value="Chromosome 1"/>
</dbReference>
<dbReference type="Bgee" id="ENSDARG00000091678">
    <property type="expression patterns" value="Expressed in ovary and 28 other cell types or tissues"/>
</dbReference>
<dbReference type="GO" id="GO:0160232">
    <property type="term" value="C:INTAC complex"/>
    <property type="evidence" value="ECO:0000250"/>
    <property type="project" value="UniProtKB"/>
</dbReference>
<dbReference type="GO" id="GO:0032039">
    <property type="term" value="C:integrator complex"/>
    <property type="evidence" value="ECO:0000318"/>
    <property type="project" value="GO_Central"/>
</dbReference>
<dbReference type="GO" id="GO:0008270">
    <property type="term" value="F:zinc ion binding"/>
    <property type="evidence" value="ECO:0007669"/>
    <property type="project" value="UniProtKB-KW"/>
</dbReference>
<dbReference type="GO" id="GO:0160240">
    <property type="term" value="P:RNA polymerase II transcription initiation surveillance"/>
    <property type="evidence" value="ECO:0000250"/>
    <property type="project" value="UniProtKB"/>
</dbReference>
<dbReference type="GO" id="GO:0034472">
    <property type="term" value="P:snRNA 3'-end processing"/>
    <property type="evidence" value="ECO:0000318"/>
    <property type="project" value="GO_Central"/>
</dbReference>
<dbReference type="CDD" id="cd15501">
    <property type="entry name" value="PHD_Int12"/>
    <property type="match status" value="1"/>
</dbReference>
<dbReference type="FunFam" id="3.30.40.10:FF:000101">
    <property type="entry name" value="Integrator complex subunit 12"/>
    <property type="match status" value="1"/>
</dbReference>
<dbReference type="Gene3D" id="3.30.40.10">
    <property type="entry name" value="Zinc/RING finger domain, C3HC4 (zinc finger)"/>
    <property type="match status" value="1"/>
</dbReference>
<dbReference type="InterPro" id="IPR039054">
    <property type="entry name" value="Int12_PHD"/>
</dbReference>
<dbReference type="InterPro" id="IPR051776">
    <property type="entry name" value="Integrator_subunit_12"/>
</dbReference>
<dbReference type="InterPro" id="IPR019786">
    <property type="entry name" value="Zinc_finger_PHD-type_CS"/>
</dbReference>
<dbReference type="InterPro" id="IPR011011">
    <property type="entry name" value="Znf_FYVE_PHD"/>
</dbReference>
<dbReference type="InterPro" id="IPR001965">
    <property type="entry name" value="Znf_PHD"/>
</dbReference>
<dbReference type="InterPro" id="IPR019787">
    <property type="entry name" value="Znf_PHD-finger"/>
</dbReference>
<dbReference type="InterPro" id="IPR013083">
    <property type="entry name" value="Znf_RING/FYVE/PHD"/>
</dbReference>
<dbReference type="PANTHER" id="PTHR13415:SF2">
    <property type="entry name" value="INTEGRATOR COMPLEX SUBUNIT 12"/>
    <property type="match status" value="1"/>
</dbReference>
<dbReference type="PANTHER" id="PTHR13415">
    <property type="entry name" value="NUCLEAR FACTOR-RELATED"/>
    <property type="match status" value="1"/>
</dbReference>
<dbReference type="Pfam" id="PF00628">
    <property type="entry name" value="PHD"/>
    <property type="match status" value="1"/>
</dbReference>
<dbReference type="SMART" id="SM00249">
    <property type="entry name" value="PHD"/>
    <property type="match status" value="1"/>
</dbReference>
<dbReference type="SUPFAM" id="SSF57903">
    <property type="entry name" value="FYVE/PHD zinc finger"/>
    <property type="match status" value="1"/>
</dbReference>
<dbReference type="PROSITE" id="PS01359">
    <property type="entry name" value="ZF_PHD_1"/>
    <property type="match status" value="1"/>
</dbReference>
<dbReference type="PROSITE" id="PS50016">
    <property type="entry name" value="ZF_PHD_2"/>
    <property type="match status" value="1"/>
</dbReference>
<organism>
    <name type="scientific">Danio rerio</name>
    <name type="common">Zebrafish</name>
    <name type="synonym">Brachydanio rerio</name>
    <dbReference type="NCBI Taxonomy" id="7955"/>
    <lineage>
        <taxon>Eukaryota</taxon>
        <taxon>Metazoa</taxon>
        <taxon>Chordata</taxon>
        <taxon>Craniata</taxon>
        <taxon>Vertebrata</taxon>
        <taxon>Euteleostomi</taxon>
        <taxon>Actinopterygii</taxon>
        <taxon>Neopterygii</taxon>
        <taxon>Teleostei</taxon>
        <taxon>Ostariophysi</taxon>
        <taxon>Cypriniformes</taxon>
        <taxon>Danionidae</taxon>
        <taxon>Danioninae</taxon>
        <taxon>Danio</taxon>
    </lineage>
</organism>
<feature type="chain" id="PRO_0000259570" description="Integrator complex subunit 12">
    <location>
        <begin position="1"/>
        <end position="479"/>
    </location>
</feature>
<feature type="zinc finger region" description="PHD-type" evidence="2">
    <location>
        <begin position="161"/>
        <end position="217"/>
    </location>
</feature>
<feature type="region of interest" description="Disordered" evidence="3">
    <location>
        <begin position="57"/>
        <end position="140"/>
    </location>
</feature>
<feature type="region of interest" description="Disordered" evidence="3">
    <location>
        <begin position="221"/>
        <end position="241"/>
    </location>
</feature>
<feature type="region of interest" description="Disordered" evidence="3">
    <location>
        <begin position="274"/>
        <end position="293"/>
    </location>
</feature>
<feature type="region of interest" description="Disordered" evidence="3">
    <location>
        <begin position="305"/>
        <end position="479"/>
    </location>
</feature>
<feature type="compositionally biased region" description="Low complexity" evidence="3">
    <location>
        <begin position="70"/>
        <end position="90"/>
    </location>
</feature>
<feature type="compositionally biased region" description="Basic and acidic residues" evidence="3">
    <location>
        <begin position="91"/>
        <end position="128"/>
    </location>
</feature>
<feature type="compositionally biased region" description="Low complexity" evidence="3">
    <location>
        <begin position="223"/>
        <end position="239"/>
    </location>
</feature>
<feature type="compositionally biased region" description="Low complexity" evidence="3">
    <location>
        <begin position="280"/>
        <end position="289"/>
    </location>
</feature>
<feature type="compositionally biased region" description="Polar residues" evidence="3">
    <location>
        <begin position="305"/>
        <end position="328"/>
    </location>
</feature>
<feature type="compositionally biased region" description="Gly residues" evidence="3">
    <location>
        <begin position="354"/>
        <end position="364"/>
    </location>
</feature>
<feature type="compositionally biased region" description="Low complexity" evidence="3">
    <location>
        <begin position="399"/>
        <end position="411"/>
    </location>
</feature>
<feature type="compositionally biased region" description="Gly residues" evidence="3">
    <location>
        <begin position="412"/>
        <end position="428"/>
    </location>
</feature>
<feature type="compositionally biased region" description="Low complexity" evidence="3">
    <location>
        <begin position="429"/>
        <end position="451"/>
    </location>
</feature>
<feature type="compositionally biased region" description="Basic residues" evidence="3">
    <location>
        <begin position="466"/>
        <end position="479"/>
    </location>
</feature>
<feature type="sequence conflict" description="In Ref. 1; AAH96989." evidence="4" ref="1">
    <original>A</original>
    <variation>V</variation>
    <location>
        <position position="77"/>
    </location>
</feature>
<feature type="sequence conflict" description="In Ref. 1; AAH96989." evidence="4" ref="1">
    <original>T</original>
    <variation>S</variation>
    <location>
        <position position="84"/>
    </location>
</feature>
<feature type="sequence conflict" description="In Ref. 1; AAH96989." evidence="4" ref="1">
    <original>S</original>
    <variation>N</variation>
    <location>
        <position position="85"/>
    </location>
</feature>
<feature type="sequence conflict" description="In Ref. 1; AAH96989." evidence="4" ref="1">
    <original>T</original>
    <variation>I</variation>
    <location>
        <position position="91"/>
    </location>
</feature>
<keyword id="KW-0479">Metal-binding</keyword>
<keyword id="KW-0539">Nucleus</keyword>
<keyword id="KW-1185">Reference proteome</keyword>
<keyword id="KW-0862">Zinc</keyword>
<keyword id="KW-0863">Zinc-finger</keyword>
<accession>Q6IQU7</accession>
<accession>Q4V9A0</accession>
<protein>
    <recommendedName>
        <fullName>Integrator complex subunit 12</fullName>
        <shortName>Int12</shortName>
    </recommendedName>
</protein>
<sequence length="479" mass="49591">MAGTVSLELDPIFLKGLGYLHSKSKDSAEKLKALLDESLARGSDSIYRNSIKEAEVSKVSLPKMTKQDSKSSSSSSASSSITTTSSSKSSTSEKSKKESEKRTLEKIRVDPGEGVEPPKKPRLEKQDSHSSPIAFQTKDIPIPDFTDIDETNADDFAMEMGLACVVCRQMTVTSGNQLVECQECHNLYHQECHKPQVTDKDVNDPRLVWYCARCTRQMKRMAQKTQKPPQKPAPALATTVPLLKDPLVKKAELKPKPETTGSFQAFKRTEVKATAASGNSSSSSSSSSSLPPGLTGWAAFTKATSNVGPSSTKLSTSQSGNSKTSPAASGSKPVGLSALANVKPALATKPSGGSSAGSGNGNNGSGTVPLKAPPPLTLGKQVLSRSASGDSLGKMTVTGSLSPGAAPSSSLGGNGGSGGNGAGNGGNSAGSSSSSGNNNNNGAKASADGKAPTSQESQLNAMKRLQMVKKKAAQKKLKK</sequence>
<name>INT12_DANRE</name>